<comment type="function">
    <text evidence="2">The complex LTO1:YAE1 may function as a target specific adapter that probably recruits apo-RPLI1 to the cytosolic iron-sulfur protein assembly (CIA) complex machinery. May be required for biogenesis of the large ribosomal subunit and initiation of translation.</text>
</comment>
<comment type="subunit">
    <text evidence="2">May form a complex with LTO1.</text>
</comment>
<comment type="subcellular location">
    <subcellularLocation>
        <location evidence="1">Cytoplasm</location>
    </subcellularLocation>
    <subcellularLocation>
        <location evidence="1">Nucleus</location>
    </subcellularLocation>
</comment>
<comment type="similarity">
    <text evidence="4">Belongs to the YAE1 family.</text>
</comment>
<sequence>MQPSYKDLHCACQSNSQTNQSSVYSMSDDIWEDDDEDEEQEEYDRGDNSNDYNKDGVGSRQQNKQTQSLAMNEIARRHRKQGYVDGLAKHQEENLQKGFDFAYSIGADLGIKVGRLLARACIADGANNDLKDKSGGSGNDLGSLKECMNALNISKVLDLKYFDDHLNLKDGKHGLIEEWQNKSN</sequence>
<keyword id="KW-0963">Cytoplasm</keyword>
<keyword id="KW-0539">Nucleus</keyword>
<keyword id="KW-1185">Reference proteome</keyword>
<gene>
    <name type="primary">YAE1</name>
    <name type="ORF">LELG_05064</name>
</gene>
<dbReference type="EMBL" id="CH981531">
    <property type="protein sequence ID" value="EDK46883.1"/>
    <property type="molecule type" value="Genomic_DNA"/>
</dbReference>
<dbReference type="RefSeq" id="XP_001523648.1">
    <property type="nucleotide sequence ID" value="XM_001523598.1"/>
</dbReference>
<dbReference type="FunCoup" id="A5E625">
    <property type="interactions" value="2"/>
</dbReference>
<dbReference type="STRING" id="379508.A5E625"/>
<dbReference type="GeneID" id="5230764"/>
<dbReference type="KEGG" id="lel:PVL30_005203"/>
<dbReference type="VEuPathDB" id="FungiDB:LELG_05064"/>
<dbReference type="HOGENOM" id="CLU_066684_2_0_1"/>
<dbReference type="InParanoid" id="A5E625"/>
<dbReference type="OMA" id="CKNNEAP"/>
<dbReference type="OrthoDB" id="20086at2759"/>
<dbReference type="Proteomes" id="UP000001996">
    <property type="component" value="Unassembled WGS sequence"/>
</dbReference>
<dbReference type="GO" id="GO:0005737">
    <property type="term" value="C:cytoplasm"/>
    <property type="evidence" value="ECO:0007669"/>
    <property type="project" value="UniProtKB-SubCell"/>
</dbReference>
<dbReference type="GO" id="GO:0005634">
    <property type="term" value="C:nucleus"/>
    <property type="evidence" value="ECO:0007669"/>
    <property type="project" value="UniProtKB-SubCell"/>
</dbReference>
<dbReference type="GO" id="GO:0051604">
    <property type="term" value="P:protein maturation"/>
    <property type="evidence" value="ECO:0000250"/>
    <property type="project" value="UniProtKB"/>
</dbReference>
<dbReference type="InterPro" id="IPR019191">
    <property type="entry name" value="Essential_protein_Yae1_N"/>
</dbReference>
<dbReference type="Pfam" id="PF09811">
    <property type="entry name" value="Yae1_N"/>
    <property type="match status" value="1"/>
</dbReference>
<protein>
    <recommendedName>
        <fullName>Protein YAE1</fullName>
    </recommendedName>
</protein>
<reference key="1">
    <citation type="journal article" date="2009" name="Nature">
        <title>Evolution of pathogenicity and sexual reproduction in eight Candida genomes.</title>
        <authorList>
            <person name="Butler G."/>
            <person name="Rasmussen M.D."/>
            <person name="Lin M.F."/>
            <person name="Santos M.A.S."/>
            <person name="Sakthikumar S."/>
            <person name="Munro C.A."/>
            <person name="Rheinbay E."/>
            <person name="Grabherr M."/>
            <person name="Forche A."/>
            <person name="Reedy J.L."/>
            <person name="Agrafioti I."/>
            <person name="Arnaud M.B."/>
            <person name="Bates S."/>
            <person name="Brown A.J.P."/>
            <person name="Brunke S."/>
            <person name="Costanzo M.C."/>
            <person name="Fitzpatrick D.A."/>
            <person name="de Groot P.W.J."/>
            <person name="Harris D."/>
            <person name="Hoyer L.L."/>
            <person name="Hube B."/>
            <person name="Klis F.M."/>
            <person name="Kodira C."/>
            <person name="Lennard N."/>
            <person name="Logue M.E."/>
            <person name="Martin R."/>
            <person name="Neiman A.M."/>
            <person name="Nikolaou E."/>
            <person name="Quail M.A."/>
            <person name="Quinn J."/>
            <person name="Santos M.C."/>
            <person name="Schmitzberger F.F."/>
            <person name="Sherlock G."/>
            <person name="Shah P."/>
            <person name="Silverstein K.A.T."/>
            <person name="Skrzypek M.S."/>
            <person name="Soll D."/>
            <person name="Staggs R."/>
            <person name="Stansfield I."/>
            <person name="Stumpf M.P.H."/>
            <person name="Sudbery P.E."/>
            <person name="Srikantha T."/>
            <person name="Zeng Q."/>
            <person name="Berman J."/>
            <person name="Berriman M."/>
            <person name="Heitman J."/>
            <person name="Gow N.A.R."/>
            <person name="Lorenz M.C."/>
            <person name="Birren B.W."/>
            <person name="Kellis M."/>
            <person name="Cuomo C.A."/>
        </authorList>
    </citation>
    <scope>NUCLEOTIDE SEQUENCE [LARGE SCALE GENOMIC DNA]</scope>
    <source>
        <strain>ATCC 11503 / BCRC 21390 / CBS 2605 / JCM 1781 / NBRC 1676 / NRRL YB-4239</strain>
    </source>
</reference>
<name>YAE1_LODEL</name>
<organism>
    <name type="scientific">Lodderomyces elongisporus (strain ATCC 11503 / CBS 2605 / JCM 1781 / NBRC 1676 / NRRL YB-4239)</name>
    <name type="common">Yeast</name>
    <name type="synonym">Saccharomyces elongisporus</name>
    <dbReference type="NCBI Taxonomy" id="379508"/>
    <lineage>
        <taxon>Eukaryota</taxon>
        <taxon>Fungi</taxon>
        <taxon>Dikarya</taxon>
        <taxon>Ascomycota</taxon>
        <taxon>Saccharomycotina</taxon>
        <taxon>Pichiomycetes</taxon>
        <taxon>Debaryomycetaceae</taxon>
        <taxon>Candida/Lodderomyces clade</taxon>
        <taxon>Lodderomyces</taxon>
    </lineage>
</organism>
<accession>A5E625</accession>
<feature type="chain" id="PRO_0000324428" description="Protein YAE1">
    <location>
        <begin position="1"/>
        <end position="184"/>
    </location>
</feature>
<feature type="region of interest" description="Disordered" evidence="3">
    <location>
        <begin position="1"/>
        <end position="68"/>
    </location>
</feature>
<feature type="region of interest" description="deca-GX3 motif; required for interaction with LTO1" evidence="1">
    <location>
        <begin position="82"/>
        <end position="122"/>
    </location>
</feature>
<feature type="compositionally biased region" description="Polar residues" evidence="3">
    <location>
        <begin position="12"/>
        <end position="25"/>
    </location>
</feature>
<feature type="compositionally biased region" description="Acidic residues" evidence="3">
    <location>
        <begin position="29"/>
        <end position="42"/>
    </location>
</feature>
<feature type="compositionally biased region" description="Basic and acidic residues" evidence="3">
    <location>
        <begin position="43"/>
        <end position="54"/>
    </location>
</feature>
<feature type="compositionally biased region" description="Polar residues" evidence="3">
    <location>
        <begin position="59"/>
        <end position="68"/>
    </location>
</feature>
<evidence type="ECO:0000250" key="1">
    <source>
        <dbReference type="UniProtKB" id="P47118"/>
    </source>
</evidence>
<evidence type="ECO:0000250" key="2">
    <source>
        <dbReference type="UniProtKB" id="Q9NRH1"/>
    </source>
</evidence>
<evidence type="ECO:0000256" key="3">
    <source>
        <dbReference type="SAM" id="MobiDB-lite"/>
    </source>
</evidence>
<evidence type="ECO:0000305" key="4"/>
<proteinExistence type="inferred from homology"/>